<protein>
    <recommendedName>
        <fullName>Putative cTAGE family member 3</fullName>
        <shortName>Protein cTAGE-3</shortName>
    </recommendedName>
</protein>
<evidence type="ECO:0000255" key="1"/>
<evidence type="ECO:0000269" key="2">
    <source>
    </source>
</evidence>
<evidence type="ECO:0000305" key="3"/>
<accession>Q8IX95</accession>
<sequence>MTFKGFQMNEEKLEIGIQDASSENCQLQESQKQLLQEAEVWKEQVSELNKQKITFEDSKVHAEQVLNDKENHIETLTERLLKIKDQAAVLEEDITDDGNLELEMNSELKDGAYLDNPPKGALKKLIHAAKLNASLTTLEGERNQFIFSYLKLIKPGRA</sequence>
<reference key="1">
    <citation type="journal article" date="2003" name="J. Invest. Dermatol.">
        <title>cTAGE: a cutaneous T cell lymphoma associated antigen family with tumor-specific splicing.</title>
        <authorList>
            <person name="Usener D."/>
            <person name="Schadendorf D."/>
            <person name="Koch J."/>
            <person name="Duebel S."/>
            <person name="Eichmueller S."/>
        </authorList>
    </citation>
    <scope>NUCLEOTIDE SEQUENCE [MRNA]</scope>
    <scope>TISSUE SPECIFICITY</scope>
    <source>
        <tissue>Testis</tissue>
    </source>
</reference>
<gene>
    <name type="primary">CTAGE3P</name>
    <name type="synonym">CTAGE3</name>
</gene>
<proteinExistence type="uncertain"/>
<name>CTGE3_HUMAN</name>
<organism>
    <name type="scientific">Homo sapiens</name>
    <name type="common">Human</name>
    <dbReference type="NCBI Taxonomy" id="9606"/>
    <lineage>
        <taxon>Eukaryota</taxon>
        <taxon>Metazoa</taxon>
        <taxon>Chordata</taxon>
        <taxon>Craniata</taxon>
        <taxon>Vertebrata</taxon>
        <taxon>Euteleostomi</taxon>
        <taxon>Mammalia</taxon>
        <taxon>Eutheria</taxon>
        <taxon>Euarchontoglires</taxon>
        <taxon>Primates</taxon>
        <taxon>Haplorrhini</taxon>
        <taxon>Catarrhini</taxon>
        <taxon>Hominidae</taxon>
        <taxon>Homo</taxon>
    </lineage>
</organism>
<comment type="function">
    <text>Tumor-associated antigen.</text>
</comment>
<comment type="tissue specificity">
    <text evidence="2">Expressed in normal tissues including colon, mammary gland, ovary, placenta, stomach and testis, as well as several fetal tissues.</text>
</comment>
<comment type="miscellaneous">
    <text>Tumor-associated antigen found in several cutaneous T-cell lymphoma (CTCL). Expressed in 4 of 11 Mycosis fungoides tissues and in a T-zone lymphoma.</text>
</comment>
<comment type="similarity">
    <text evidence="3">Belongs to the cTAGE family.</text>
</comment>
<comment type="caution">
    <text evidence="3">Could be the product of a pseudogene.</text>
</comment>
<keyword id="KW-0175">Coiled coil</keyword>
<keyword id="KW-1185">Reference proteome</keyword>
<dbReference type="EMBL" id="AF338231">
    <property type="protein sequence ID" value="AAN77608.1"/>
    <property type="molecule type" value="mRNA"/>
</dbReference>
<dbReference type="SMR" id="Q8IX95"/>
<dbReference type="BioMuta" id="HGNC:24348"/>
<dbReference type="jPOST" id="Q8IX95"/>
<dbReference type="MassIVE" id="Q8IX95"/>
<dbReference type="PeptideAtlas" id="Q8IX95"/>
<dbReference type="ProteomicsDB" id="70977"/>
<dbReference type="AGR" id="HGNC:24348"/>
<dbReference type="GeneCards" id="CTAGE3P"/>
<dbReference type="HGNC" id="HGNC:24348">
    <property type="gene designation" value="CTAGE3P"/>
</dbReference>
<dbReference type="MIM" id="608857">
    <property type="type" value="gene"/>
</dbReference>
<dbReference type="neXtProt" id="NX_Q8IX95"/>
<dbReference type="InParanoid" id="Q8IX95"/>
<dbReference type="PAN-GO" id="Q8IX95">
    <property type="GO annotations" value="5 GO annotations based on evolutionary models"/>
</dbReference>
<dbReference type="ChiTaRS" id="CTAGE3P">
    <property type="organism name" value="human"/>
</dbReference>
<dbReference type="Pharos" id="Q8IX95">
    <property type="development level" value="Tdark"/>
</dbReference>
<dbReference type="PRO" id="PR:Q8IX95"/>
<dbReference type="Proteomes" id="UP000005640">
    <property type="component" value="Unplaced"/>
</dbReference>
<dbReference type="RNAct" id="Q8IX95">
    <property type="molecule type" value="protein"/>
</dbReference>
<dbReference type="InterPro" id="IPR051500">
    <property type="entry name" value="cTAGE_MIA/OTOR"/>
</dbReference>
<dbReference type="PANTHER" id="PTHR23158">
    <property type="entry name" value="MELANOMA INHIBITORY ACTIVITY-RELATED"/>
    <property type="match status" value="1"/>
</dbReference>
<dbReference type="PANTHER" id="PTHR23158:SF55">
    <property type="entry name" value="MIA SH3 DOMAIN ER EXPORT FACTOR 2"/>
    <property type="match status" value="1"/>
</dbReference>
<feature type="chain" id="PRO_0000189539" description="Putative cTAGE family member 3">
    <location>
        <begin position="1"/>
        <end position="158"/>
    </location>
</feature>
<feature type="coiled-coil region" evidence="1">
    <location>
        <begin position="26"/>
        <end position="96"/>
    </location>
</feature>